<comment type="function">
    <text evidence="1">Necessary for formate dehydrogenase activity.</text>
</comment>
<comment type="subcellular location">
    <subcellularLocation>
        <location evidence="1">Cytoplasm</location>
    </subcellularLocation>
</comment>
<comment type="similarity">
    <text evidence="1">Belongs to the FdhE family.</text>
</comment>
<organism>
    <name type="scientific">Haemophilus ducreyi (strain 35000HP / ATCC 700724)</name>
    <dbReference type="NCBI Taxonomy" id="233412"/>
    <lineage>
        <taxon>Bacteria</taxon>
        <taxon>Pseudomonadati</taxon>
        <taxon>Pseudomonadota</taxon>
        <taxon>Gammaproteobacteria</taxon>
        <taxon>Pasteurellales</taxon>
        <taxon>Pasteurellaceae</taxon>
        <taxon>Haemophilus</taxon>
    </lineage>
</organism>
<reference key="1">
    <citation type="submission" date="2003-06" db="EMBL/GenBank/DDBJ databases">
        <title>The complete genome sequence of Haemophilus ducreyi.</title>
        <authorList>
            <person name="Munson R.S. Jr."/>
            <person name="Ray W.C."/>
            <person name="Mahairas G."/>
            <person name="Sabo P."/>
            <person name="Mungur R."/>
            <person name="Johnson L."/>
            <person name="Nguyen D."/>
            <person name="Wang J."/>
            <person name="Forst C."/>
            <person name="Hood L."/>
        </authorList>
    </citation>
    <scope>NUCLEOTIDE SEQUENCE [LARGE SCALE GENOMIC DNA]</scope>
    <source>
        <strain>35000HP / ATCC 700724</strain>
    </source>
</reference>
<gene>
    <name evidence="1" type="primary">fdhE</name>
    <name type="ordered locus">HD_1110</name>
</gene>
<proteinExistence type="inferred from homology"/>
<dbReference type="EMBL" id="AE017143">
    <property type="protein sequence ID" value="AAP95976.1"/>
    <property type="molecule type" value="Genomic_DNA"/>
</dbReference>
<dbReference type="RefSeq" id="WP_010945025.1">
    <property type="nucleotide sequence ID" value="NC_002940.2"/>
</dbReference>
<dbReference type="SMR" id="Q7VM84"/>
<dbReference type="STRING" id="233412.HD_1110"/>
<dbReference type="KEGG" id="hdu:HD_1110"/>
<dbReference type="eggNOG" id="COG3058">
    <property type="taxonomic scope" value="Bacteria"/>
</dbReference>
<dbReference type="HOGENOM" id="CLU_055275_0_0_6"/>
<dbReference type="OrthoDB" id="9794151at2"/>
<dbReference type="Proteomes" id="UP000001022">
    <property type="component" value="Chromosome"/>
</dbReference>
<dbReference type="GO" id="GO:0005829">
    <property type="term" value="C:cytosol"/>
    <property type="evidence" value="ECO:0007669"/>
    <property type="project" value="TreeGrafter"/>
</dbReference>
<dbReference type="GO" id="GO:0008199">
    <property type="term" value="F:ferric iron binding"/>
    <property type="evidence" value="ECO:0007669"/>
    <property type="project" value="TreeGrafter"/>
</dbReference>
<dbReference type="GO" id="GO:0051604">
    <property type="term" value="P:protein maturation"/>
    <property type="evidence" value="ECO:0007669"/>
    <property type="project" value="TreeGrafter"/>
</dbReference>
<dbReference type="CDD" id="cd16341">
    <property type="entry name" value="FdhE"/>
    <property type="match status" value="1"/>
</dbReference>
<dbReference type="FunFam" id="3.90.1670.10:FF:000001">
    <property type="entry name" value="Protein FdhE"/>
    <property type="match status" value="1"/>
</dbReference>
<dbReference type="Gene3D" id="3.90.1670.10">
    <property type="entry name" value="FdhE-like domain"/>
    <property type="match status" value="1"/>
</dbReference>
<dbReference type="HAMAP" id="MF_00611">
    <property type="entry name" value="FdeH"/>
    <property type="match status" value="1"/>
</dbReference>
<dbReference type="InterPro" id="IPR024064">
    <property type="entry name" value="FdhE-like_sf"/>
</dbReference>
<dbReference type="InterPro" id="IPR056796">
    <property type="entry name" value="FdhE_C"/>
</dbReference>
<dbReference type="InterPro" id="IPR056797">
    <property type="entry name" value="FdhE_central"/>
</dbReference>
<dbReference type="InterPro" id="IPR056774">
    <property type="entry name" value="FdhE_N"/>
</dbReference>
<dbReference type="InterPro" id="IPR006452">
    <property type="entry name" value="Formate_DH_accessory"/>
</dbReference>
<dbReference type="NCBIfam" id="TIGR01562">
    <property type="entry name" value="FdhE"/>
    <property type="match status" value="1"/>
</dbReference>
<dbReference type="NCBIfam" id="NF002925">
    <property type="entry name" value="PRK03564.1"/>
    <property type="match status" value="1"/>
</dbReference>
<dbReference type="PANTHER" id="PTHR37689">
    <property type="entry name" value="PROTEIN FDHE"/>
    <property type="match status" value="1"/>
</dbReference>
<dbReference type="PANTHER" id="PTHR37689:SF1">
    <property type="entry name" value="PROTEIN FDHE"/>
    <property type="match status" value="1"/>
</dbReference>
<dbReference type="Pfam" id="PF24860">
    <property type="entry name" value="FdhE_C"/>
    <property type="match status" value="1"/>
</dbReference>
<dbReference type="Pfam" id="PF24859">
    <property type="entry name" value="FdhE_central"/>
    <property type="match status" value="1"/>
</dbReference>
<dbReference type="Pfam" id="PF04216">
    <property type="entry name" value="FdhE_N"/>
    <property type="match status" value="1"/>
</dbReference>
<dbReference type="PIRSF" id="PIRSF018296">
    <property type="entry name" value="Format_dh_formtn"/>
    <property type="match status" value="1"/>
</dbReference>
<dbReference type="SUPFAM" id="SSF144020">
    <property type="entry name" value="FdhE-like"/>
    <property type="match status" value="1"/>
</dbReference>
<keyword id="KW-0963">Cytoplasm</keyword>
<keyword id="KW-1185">Reference proteome</keyword>
<accession>Q7VM84</accession>
<sequence length="305" mass="34802">MSIRILPENEIKPSASAFEIPPLLFANPKNLYTRRAKRLRELAKNNPLRDYLEFAAHLVDIQLTLLETAPIGNYAEKLTAYLTENQGQKPLNKQQFARDEKWLELLLALIKQCKPYATGAILTTLEFLEKASYAELNNLADHLLNERYEQVSPDQSVFIWLALSLYWTQLAQQLPRHTQAEIGERHTCPVCGSAPITSVIHLDKTQGLRYLHCALCESEWNMTRAQCSNCDESGDLNYWSFDTVEAPIKAESCGDCHSYLKVLYQEKDPYVEPLADDLASLMLDIEMEQKGFVRSGLNPFLFSIE</sequence>
<feature type="chain" id="PRO_0000189641" description="Protein FdhE homolog">
    <location>
        <begin position="1"/>
        <end position="305"/>
    </location>
</feature>
<evidence type="ECO:0000255" key="1">
    <source>
        <dbReference type="HAMAP-Rule" id="MF_00611"/>
    </source>
</evidence>
<name>FDHE_HAEDU</name>
<protein>
    <recommendedName>
        <fullName evidence="1">Protein FdhE homolog</fullName>
    </recommendedName>
</protein>